<keyword id="KW-0687">Ribonucleoprotein</keyword>
<keyword id="KW-0689">Ribosomal protein</keyword>
<protein>
    <recommendedName>
        <fullName evidence="1">Small ribosomal subunit protein uS10</fullName>
    </recommendedName>
    <alternativeName>
        <fullName evidence="2">30S ribosomal protein S10</fullName>
    </alternativeName>
</protein>
<feature type="chain" id="PRO_1000060858" description="Small ribosomal subunit protein uS10">
    <location>
        <begin position="1"/>
        <end position="103"/>
    </location>
</feature>
<sequence>MQNQRIRIRLKAFDHRLIDQSTAEIVETAKRTGAQVRGPIPLPTRKERFTILISPHVNKDARDQYEIRTHKRLVDIVEPTEKTVDALMRLDLAAGVDVQISLG</sequence>
<organism>
    <name type="scientific">Enterobacter sp. (strain 638)</name>
    <dbReference type="NCBI Taxonomy" id="399742"/>
    <lineage>
        <taxon>Bacteria</taxon>
        <taxon>Pseudomonadati</taxon>
        <taxon>Pseudomonadota</taxon>
        <taxon>Gammaproteobacteria</taxon>
        <taxon>Enterobacterales</taxon>
        <taxon>Enterobacteriaceae</taxon>
        <taxon>Enterobacter</taxon>
    </lineage>
</organism>
<dbReference type="EMBL" id="CP000653">
    <property type="protein sequence ID" value="ABP62409.1"/>
    <property type="molecule type" value="Genomic_DNA"/>
</dbReference>
<dbReference type="RefSeq" id="WP_009639175.1">
    <property type="nucleotide sequence ID" value="NC_009436.1"/>
</dbReference>
<dbReference type="SMR" id="A4WFC9"/>
<dbReference type="STRING" id="399742.Ent638_3752"/>
<dbReference type="GeneID" id="95418945"/>
<dbReference type="KEGG" id="ent:Ent638_3752"/>
<dbReference type="eggNOG" id="COG0051">
    <property type="taxonomic scope" value="Bacteria"/>
</dbReference>
<dbReference type="HOGENOM" id="CLU_122625_1_3_6"/>
<dbReference type="OrthoDB" id="9804464at2"/>
<dbReference type="Proteomes" id="UP000000230">
    <property type="component" value="Chromosome"/>
</dbReference>
<dbReference type="GO" id="GO:1990904">
    <property type="term" value="C:ribonucleoprotein complex"/>
    <property type="evidence" value="ECO:0007669"/>
    <property type="project" value="UniProtKB-KW"/>
</dbReference>
<dbReference type="GO" id="GO:0005840">
    <property type="term" value="C:ribosome"/>
    <property type="evidence" value="ECO:0007669"/>
    <property type="project" value="UniProtKB-KW"/>
</dbReference>
<dbReference type="GO" id="GO:0003735">
    <property type="term" value="F:structural constituent of ribosome"/>
    <property type="evidence" value="ECO:0007669"/>
    <property type="project" value="InterPro"/>
</dbReference>
<dbReference type="GO" id="GO:0000049">
    <property type="term" value="F:tRNA binding"/>
    <property type="evidence" value="ECO:0007669"/>
    <property type="project" value="UniProtKB-UniRule"/>
</dbReference>
<dbReference type="GO" id="GO:0006412">
    <property type="term" value="P:translation"/>
    <property type="evidence" value="ECO:0007669"/>
    <property type="project" value="UniProtKB-UniRule"/>
</dbReference>
<dbReference type="FunFam" id="3.30.70.600:FF:000001">
    <property type="entry name" value="30S ribosomal protein S10"/>
    <property type="match status" value="1"/>
</dbReference>
<dbReference type="Gene3D" id="3.30.70.600">
    <property type="entry name" value="Ribosomal protein S10 domain"/>
    <property type="match status" value="1"/>
</dbReference>
<dbReference type="HAMAP" id="MF_00508">
    <property type="entry name" value="Ribosomal_uS10"/>
    <property type="match status" value="1"/>
</dbReference>
<dbReference type="InterPro" id="IPR001848">
    <property type="entry name" value="Ribosomal_uS10"/>
</dbReference>
<dbReference type="InterPro" id="IPR018268">
    <property type="entry name" value="Ribosomal_uS10_CS"/>
</dbReference>
<dbReference type="InterPro" id="IPR027486">
    <property type="entry name" value="Ribosomal_uS10_dom"/>
</dbReference>
<dbReference type="InterPro" id="IPR036838">
    <property type="entry name" value="Ribosomal_uS10_dom_sf"/>
</dbReference>
<dbReference type="NCBIfam" id="NF001861">
    <property type="entry name" value="PRK00596.1"/>
    <property type="match status" value="1"/>
</dbReference>
<dbReference type="NCBIfam" id="TIGR01049">
    <property type="entry name" value="rpsJ_bact"/>
    <property type="match status" value="1"/>
</dbReference>
<dbReference type="PANTHER" id="PTHR11700">
    <property type="entry name" value="30S RIBOSOMAL PROTEIN S10 FAMILY MEMBER"/>
    <property type="match status" value="1"/>
</dbReference>
<dbReference type="Pfam" id="PF00338">
    <property type="entry name" value="Ribosomal_S10"/>
    <property type="match status" value="1"/>
</dbReference>
<dbReference type="PRINTS" id="PR00971">
    <property type="entry name" value="RIBOSOMALS10"/>
</dbReference>
<dbReference type="SMART" id="SM01403">
    <property type="entry name" value="Ribosomal_S10"/>
    <property type="match status" value="1"/>
</dbReference>
<dbReference type="SUPFAM" id="SSF54999">
    <property type="entry name" value="Ribosomal protein S10"/>
    <property type="match status" value="1"/>
</dbReference>
<dbReference type="PROSITE" id="PS00361">
    <property type="entry name" value="RIBOSOMAL_S10"/>
    <property type="match status" value="1"/>
</dbReference>
<proteinExistence type="inferred from homology"/>
<reference key="1">
    <citation type="journal article" date="2010" name="PLoS Genet.">
        <title>Genome sequence of the plant growth promoting endophytic bacterium Enterobacter sp. 638.</title>
        <authorList>
            <person name="Taghavi S."/>
            <person name="van der Lelie D."/>
            <person name="Hoffman A."/>
            <person name="Zhang Y.B."/>
            <person name="Walla M.D."/>
            <person name="Vangronsveld J."/>
            <person name="Newman L."/>
            <person name="Monchy S."/>
        </authorList>
    </citation>
    <scope>NUCLEOTIDE SEQUENCE [LARGE SCALE GENOMIC DNA]</scope>
    <source>
        <strain>638</strain>
    </source>
</reference>
<name>RS10_ENT38</name>
<accession>A4WFC9</accession>
<evidence type="ECO:0000255" key="1">
    <source>
        <dbReference type="HAMAP-Rule" id="MF_00508"/>
    </source>
</evidence>
<evidence type="ECO:0000305" key="2"/>
<gene>
    <name evidence="1" type="primary">rpsJ</name>
    <name type="ordered locus">Ent638_3752</name>
</gene>
<comment type="function">
    <text evidence="1">Involved in the binding of tRNA to the ribosomes.</text>
</comment>
<comment type="subunit">
    <text evidence="1">Part of the 30S ribosomal subunit.</text>
</comment>
<comment type="similarity">
    <text evidence="1">Belongs to the universal ribosomal protein uS10 family.</text>
</comment>